<accession>Q8P6X5</accession>
<evidence type="ECO:0000255" key="1">
    <source>
        <dbReference type="HAMAP-Rule" id="MF_01629"/>
    </source>
</evidence>
<keyword id="KW-0285">Flavoprotein</keyword>
<keyword id="KW-0288">FMN</keyword>
<keyword id="KW-0560">Oxidoreductase</keyword>
<keyword id="KW-0664">Pyridoxine biosynthesis</keyword>
<keyword id="KW-1185">Reference proteome</keyword>
<reference key="1">
    <citation type="journal article" date="2002" name="Nature">
        <title>Comparison of the genomes of two Xanthomonas pathogens with differing host specificities.</title>
        <authorList>
            <person name="da Silva A.C.R."/>
            <person name="Ferro J.A."/>
            <person name="Reinach F.C."/>
            <person name="Farah C.S."/>
            <person name="Furlan L.R."/>
            <person name="Quaggio R.B."/>
            <person name="Monteiro-Vitorello C.B."/>
            <person name="Van Sluys M.A."/>
            <person name="Almeida N.F. Jr."/>
            <person name="Alves L.M.C."/>
            <person name="do Amaral A.M."/>
            <person name="Bertolini M.C."/>
            <person name="Camargo L.E.A."/>
            <person name="Camarotte G."/>
            <person name="Cannavan F."/>
            <person name="Cardozo J."/>
            <person name="Chambergo F."/>
            <person name="Ciapina L.P."/>
            <person name="Cicarelli R.M.B."/>
            <person name="Coutinho L.L."/>
            <person name="Cursino-Santos J.R."/>
            <person name="El-Dorry H."/>
            <person name="Faria J.B."/>
            <person name="Ferreira A.J.S."/>
            <person name="Ferreira R.C.C."/>
            <person name="Ferro M.I.T."/>
            <person name="Formighieri E.F."/>
            <person name="Franco M.C."/>
            <person name="Greggio C.C."/>
            <person name="Gruber A."/>
            <person name="Katsuyama A.M."/>
            <person name="Kishi L.T."/>
            <person name="Leite R.P."/>
            <person name="Lemos E.G.M."/>
            <person name="Lemos M.V.F."/>
            <person name="Locali E.C."/>
            <person name="Machado M.A."/>
            <person name="Madeira A.M.B.N."/>
            <person name="Martinez-Rossi N.M."/>
            <person name="Martins E.C."/>
            <person name="Meidanis J."/>
            <person name="Menck C.F.M."/>
            <person name="Miyaki C.Y."/>
            <person name="Moon D.H."/>
            <person name="Moreira L.M."/>
            <person name="Novo M.T.M."/>
            <person name="Okura V.K."/>
            <person name="Oliveira M.C."/>
            <person name="Oliveira V.R."/>
            <person name="Pereira H.A."/>
            <person name="Rossi A."/>
            <person name="Sena J.A.D."/>
            <person name="Silva C."/>
            <person name="de Souza R.F."/>
            <person name="Spinola L.A.F."/>
            <person name="Takita M.A."/>
            <person name="Tamura R.E."/>
            <person name="Teixeira E.C."/>
            <person name="Tezza R.I.D."/>
            <person name="Trindade dos Santos M."/>
            <person name="Truffi D."/>
            <person name="Tsai S.M."/>
            <person name="White F.F."/>
            <person name="Setubal J.C."/>
            <person name="Kitajima J.P."/>
        </authorList>
    </citation>
    <scope>NUCLEOTIDE SEQUENCE [LARGE SCALE GENOMIC DNA]</scope>
    <source>
        <strain>ATCC 33913 / DSM 3586 / NCPPB 528 / LMG 568 / P 25</strain>
    </source>
</reference>
<dbReference type="EC" id="1.4.3.5" evidence="1"/>
<dbReference type="EMBL" id="AE008922">
    <property type="protein sequence ID" value="AAM42112.1"/>
    <property type="molecule type" value="Genomic_DNA"/>
</dbReference>
<dbReference type="RefSeq" id="NP_638188.1">
    <property type="nucleotide sequence ID" value="NC_003902.1"/>
</dbReference>
<dbReference type="RefSeq" id="WP_011037965.1">
    <property type="nucleotide sequence ID" value="NC_003902.1"/>
</dbReference>
<dbReference type="SMR" id="Q8P6X5"/>
<dbReference type="STRING" id="190485.XCC2840"/>
<dbReference type="EnsemblBacteria" id="AAM42112">
    <property type="protein sequence ID" value="AAM42112"/>
    <property type="gene ID" value="XCC2840"/>
</dbReference>
<dbReference type="KEGG" id="xcc:XCC2840"/>
<dbReference type="PATRIC" id="fig|190485.4.peg.3039"/>
<dbReference type="eggNOG" id="COG0259">
    <property type="taxonomic scope" value="Bacteria"/>
</dbReference>
<dbReference type="HOGENOM" id="CLU_032263_2_3_6"/>
<dbReference type="OrthoDB" id="9780392at2"/>
<dbReference type="UniPathway" id="UPA01068">
    <property type="reaction ID" value="UER00304"/>
</dbReference>
<dbReference type="UniPathway" id="UPA01068">
    <property type="reaction ID" value="UER00305"/>
</dbReference>
<dbReference type="Proteomes" id="UP000001010">
    <property type="component" value="Chromosome"/>
</dbReference>
<dbReference type="GO" id="GO:0010181">
    <property type="term" value="F:FMN binding"/>
    <property type="evidence" value="ECO:0007669"/>
    <property type="project" value="UniProtKB-UniRule"/>
</dbReference>
<dbReference type="GO" id="GO:0004733">
    <property type="term" value="F:pyridoxamine phosphate oxidase activity"/>
    <property type="evidence" value="ECO:0000318"/>
    <property type="project" value="GO_Central"/>
</dbReference>
<dbReference type="GO" id="GO:0042823">
    <property type="term" value="P:pyridoxal phosphate biosynthetic process"/>
    <property type="evidence" value="ECO:0000318"/>
    <property type="project" value="GO_Central"/>
</dbReference>
<dbReference type="GO" id="GO:0008615">
    <property type="term" value="P:pyridoxine biosynthetic process"/>
    <property type="evidence" value="ECO:0007669"/>
    <property type="project" value="UniProtKB-KW"/>
</dbReference>
<dbReference type="FunFam" id="2.30.110.10:FF:000012">
    <property type="entry name" value="Predicted protein"/>
    <property type="match status" value="1"/>
</dbReference>
<dbReference type="Gene3D" id="2.30.110.10">
    <property type="entry name" value="Electron Transport, Fmn-binding Protein, Chain A"/>
    <property type="match status" value="1"/>
</dbReference>
<dbReference type="HAMAP" id="MF_01629">
    <property type="entry name" value="PdxH"/>
    <property type="match status" value="1"/>
</dbReference>
<dbReference type="InterPro" id="IPR000659">
    <property type="entry name" value="Pyridox_Oxase"/>
</dbReference>
<dbReference type="InterPro" id="IPR019740">
    <property type="entry name" value="Pyridox_Oxase_CS"/>
</dbReference>
<dbReference type="InterPro" id="IPR011576">
    <property type="entry name" value="Pyridox_Oxase_N"/>
</dbReference>
<dbReference type="InterPro" id="IPR019576">
    <property type="entry name" value="Pyridoxamine_oxidase_dimer_C"/>
</dbReference>
<dbReference type="InterPro" id="IPR012349">
    <property type="entry name" value="Split_barrel_FMN-bd"/>
</dbReference>
<dbReference type="NCBIfam" id="TIGR00558">
    <property type="entry name" value="pdxH"/>
    <property type="match status" value="1"/>
</dbReference>
<dbReference type="NCBIfam" id="NF004231">
    <property type="entry name" value="PRK05679.1"/>
    <property type="match status" value="1"/>
</dbReference>
<dbReference type="PANTHER" id="PTHR10851:SF0">
    <property type="entry name" value="PYRIDOXINE-5'-PHOSPHATE OXIDASE"/>
    <property type="match status" value="1"/>
</dbReference>
<dbReference type="PANTHER" id="PTHR10851">
    <property type="entry name" value="PYRIDOXINE-5-PHOSPHATE OXIDASE"/>
    <property type="match status" value="1"/>
</dbReference>
<dbReference type="Pfam" id="PF10590">
    <property type="entry name" value="PNP_phzG_C"/>
    <property type="match status" value="1"/>
</dbReference>
<dbReference type="Pfam" id="PF01243">
    <property type="entry name" value="PNPOx_N"/>
    <property type="match status" value="1"/>
</dbReference>
<dbReference type="PIRSF" id="PIRSF000190">
    <property type="entry name" value="Pyd_amn-ph_oxd"/>
    <property type="match status" value="1"/>
</dbReference>
<dbReference type="SUPFAM" id="SSF50475">
    <property type="entry name" value="FMN-binding split barrel"/>
    <property type="match status" value="1"/>
</dbReference>
<dbReference type="PROSITE" id="PS01064">
    <property type="entry name" value="PYRIDOX_OXIDASE"/>
    <property type="match status" value="1"/>
</dbReference>
<sequence length="199" mass="22275">MTDLYAEALATFATLYAEAQNSAEIEASAMTVATANLDGRPSARTVLLKAFDARGFVFYTHLDSAKGRDLQTHPQAALLFLWRSLREAGIQVRIEGGVQLVSADESDAYFASRPRMSQIGAWASLQSQTLGSREEFEAAIAKVEATFDGRDVPRPDGWGGFRVVPQAFEFWYGAKFRLHERWRYEADAASHWSKRMLYP</sequence>
<comment type="function">
    <text evidence="1">Catalyzes the oxidation of either pyridoxine 5'-phosphate (PNP) or pyridoxamine 5'-phosphate (PMP) into pyridoxal 5'-phosphate (PLP).</text>
</comment>
<comment type="catalytic activity">
    <reaction evidence="1">
        <text>pyridoxamine 5'-phosphate + O2 + H2O = pyridoxal 5'-phosphate + H2O2 + NH4(+)</text>
        <dbReference type="Rhea" id="RHEA:15817"/>
        <dbReference type="ChEBI" id="CHEBI:15377"/>
        <dbReference type="ChEBI" id="CHEBI:15379"/>
        <dbReference type="ChEBI" id="CHEBI:16240"/>
        <dbReference type="ChEBI" id="CHEBI:28938"/>
        <dbReference type="ChEBI" id="CHEBI:58451"/>
        <dbReference type="ChEBI" id="CHEBI:597326"/>
        <dbReference type="EC" id="1.4.3.5"/>
    </reaction>
</comment>
<comment type="catalytic activity">
    <reaction evidence="1">
        <text>pyridoxine 5'-phosphate + O2 = pyridoxal 5'-phosphate + H2O2</text>
        <dbReference type="Rhea" id="RHEA:15149"/>
        <dbReference type="ChEBI" id="CHEBI:15379"/>
        <dbReference type="ChEBI" id="CHEBI:16240"/>
        <dbReference type="ChEBI" id="CHEBI:58589"/>
        <dbReference type="ChEBI" id="CHEBI:597326"/>
        <dbReference type="EC" id="1.4.3.5"/>
    </reaction>
</comment>
<comment type="cofactor">
    <cofactor evidence="1">
        <name>FMN</name>
        <dbReference type="ChEBI" id="CHEBI:58210"/>
    </cofactor>
    <text evidence="1">Binds 1 FMN per subunit.</text>
</comment>
<comment type="pathway">
    <text evidence="1">Cofactor metabolism; pyridoxal 5'-phosphate salvage; pyridoxal 5'-phosphate from pyridoxamine 5'-phosphate: step 1/1.</text>
</comment>
<comment type="pathway">
    <text evidence="1">Cofactor metabolism; pyridoxal 5'-phosphate salvage; pyridoxal 5'-phosphate from pyridoxine 5'-phosphate: step 1/1.</text>
</comment>
<comment type="subunit">
    <text evidence="1">Homodimer.</text>
</comment>
<comment type="similarity">
    <text evidence="1">Belongs to the pyridoxamine 5'-phosphate oxidase family.</text>
</comment>
<proteinExistence type="inferred from homology"/>
<gene>
    <name evidence="1" type="primary">pdxH</name>
    <name type="ordered locus">XCC2840</name>
</gene>
<organism>
    <name type="scientific">Xanthomonas campestris pv. campestris (strain ATCC 33913 / DSM 3586 / NCPPB 528 / LMG 568 / P 25)</name>
    <dbReference type="NCBI Taxonomy" id="190485"/>
    <lineage>
        <taxon>Bacteria</taxon>
        <taxon>Pseudomonadati</taxon>
        <taxon>Pseudomonadota</taxon>
        <taxon>Gammaproteobacteria</taxon>
        <taxon>Lysobacterales</taxon>
        <taxon>Lysobacteraceae</taxon>
        <taxon>Xanthomonas</taxon>
    </lineage>
</organism>
<name>PDXH_XANCP</name>
<feature type="chain" id="PRO_0000167773" description="Pyridoxine/pyridoxamine 5'-phosphate oxidase">
    <location>
        <begin position="1"/>
        <end position="199"/>
    </location>
</feature>
<feature type="binding site" evidence="1">
    <location>
        <begin position="44"/>
        <end position="49"/>
    </location>
    <ligand>
        <name>FMN</name>
        <dbReference type="ChEBI" id="CHEBI:58210"/>
    </ligand>
</feature>
<feature type="binding site" evidence="1">
    <location>
        <position position="49"/>
    </location>
    <ligand>
        <name>substrate</name>
    </ligand>
</feature>
<feature type="binding site" evidence="1">
    <location>
        <begin position="59"/>
        <end position="60"/>
    </location>
    <ligand>
        <name>FMN</name>
        <dbReference type="ChEBI" id="CHEBI:58210"/>
    </ligand>
</feature>
<feature type="binding site" evidence="1">
    <location>
        <position position="66"/>
    </location>
    <ligand>
        <name>FMN</name>
        <dbReference type="ChEBI" id="CHEBI:58210"/>
    </ligand>
</feature>
<feature type="binding site" evidence="1">
    <location>
        <position position="91"/>
    </location>
    <ligand>
        <name>FMN</name>
        <dbReference type="ChEBI" id="CHEBI:58210"/>
    </ligand>
</feature>
<feature type="binding site" evidence="1">
    <location>
        <position position="109"/>
    </location>
    <ligand>
        <name>substrate</name>
    </ligand>
</feature>
<feature type="binding site" evidence="1">
    <location>
        <position position="113"/>
    </location>
    <ligand>
        <name>substrate</name>
    </ligand>
</feature>
<feature type="binding site" evidence="1">
    <location>
        <position position="117"/>
    </location>
    <ligand>
        <name>substrate</name>
    </ligand>
</feature>
<feature type="binding site" evidence="1">
    <location>
        <begin position="126"/>
        <end position="127"/>
    </location>
    <ligand>
        <name>FMN</name>
        <dbReference type="ChEBI" id="CHEBI:58210"/>
    </ligand>
</feature>
<feature type="binding site" evidence="1">
    <location>
        <position position="171"/>
    </location>
    <ligand>
        <name>FMN</name>
        <dbReference type="ChEBI" id="CHEBI:58210"/>
    </ligand>
</feature>
<feature type="binding site" evidence="1">
    <location>
        <begin position="177"/>
        <end position="179"/>
    </location>
    <ligand>
        <name>substrate</name>
    </ligand>
</feature>
<feature type="binding site" evidence="1">
    <location>
        <position position="181"/>
    </location>
    <ligand>
        <name>FMN</name>
        <dbReference type="ChEBI" id="CHEBI:58210"/>
    </ligand>
</feature>
<protein>
    <recommendedName>
        <fullName evidence="1">Pyridoxine/pyridoxamine 5'-phosphate oxidase</fullName>
        <ecNumber evidence="1">1.4.3.5</ecNumber>
    </recommendedName>
    <alternativeName>
        <fullName evidence="1">PNP/PMP oxidase</fullName>
        <shortName evidence="1">PNPOx</shortName>
    </alternativeName>
    <alternativeName>
        <fullName evidence="1">Pyridoxal 5'-phosphate synthase</fullName>
    </alternativeName>
</protein>